<sequence>MSTTFCSSVSMQATSLAATTRISFQKPGLVSRTNLSFNLRRSIPTRLSVSCAAKPETVEKVSKIVKKQLSLKDDQKVVAETKFADLGADSLDTVEIVMGLEEEFDIEMAEEKAQKIATVEEAAELIEELVQAKK</sequence>
<name>ACP2_BRANA</name>
<dbReference type="EMBL" id="X16115">
    <property type="protein sequence ID" value="CAA34248.1"/>
    <property type="molecule type" value="Genomic_DNA"/>
</dbReference>
<dbReference type="EMBL" id="X13127">
    <property type="protein sequence ID" value="CAA31518.1"/>
    <property type="molecule type" value="mRNA"/>
</dbReference>
<dbReference type="PIR" id="S10472">
    <property type="entry name" value="S10472"/>
</dbReference>
<dbReference type="RefSeq" id="XP_013750751.1">
    <property type="nucleotide sequence ID" value="XM_013895297.1"/>
</dbReference>
<dbReference type="SMR" id="P17650"/>
<dbReference type="GeneID" id="106453069"/>
<dbReference type="KEGG" id="bna:106453069"/>
<dbReference type="OrthoDB" id="448946at2759"/>
<dbReference type="UniPathway" id="UPA00094"/>
<dbReference type="GO" id="GO:0009507">
    <property type="term" value="C:chloroplast"/>
    <property type="evidence" value="ECO:0007669"/>
    <property type="project" value="UniProtKB-SubCell"/>
</dbReference>
<dbReference type="GO" id="GO:0000036">
    <property type="term" value="F:acyl carrier activity"/>
    <property type="evidence" value="ECO:0007669"/>
    <property type="project" value="InterPro"/>
</dbReference>
<dbReference type="GO" id="GO:0031177">
    <property type="term" value="F:phosphopantetheine binding"/>
    <property type="evidence" value="ECO:0007669"/>
    <property type="project" value="InterPro"/>
</dbReference>
<dbReference type="FunFam" id="1.10.1200.10:FF:000017">
    <property type="entry name" value="Acyl carrier protein"/>
    <property type="match status" value="1"/>
</dbReference>
<dbReference type="Gene3D" id="1.10.1200.10">
    <property type="entry name" value="ACP-like"/>
    <property type="match status" value="1"/>
</dbReference>
<dbReference type="HAMAP" id="MF_01217">
    <property type="entry name" value="Acyl_carrier"/>
    <property type="match status" value="1"/>
</dbReference>
<dbReference type="InterPro" id="IPR003231">
    <property type="entry name" value="ACP"/>
</dbReference>
<dbReference type="InterPro" id="IPR036736">
    <property type="entry name" value="ACP-like_sf"/>
</dbReference>
<dbReference type="InterPro" id="IPR044813">
    <property type="entry name" value="ACP_chloroplastic"/>
</dbReference>
<dbReference type="InterPro" id="IPR020806">
    <property type="entry name" value="PKS_PP-bd"/>
</dbReference>
<dbReference type="InterPro" id="IPR009081">
    <property type="entry name" value="PP-bd_ACP"/>
</dbReference>
<dbReference type="InterPro" id="IPR006162">
    <property type="entry name" value="Ppantetheine_attach_site"/>
</dbReference>
<dbReference type="NCBIfam" id="TIGR00517">
    <property type="entry name" value="acyl_carrier"/>
    <property type="match status" value="1"/>
</dbReference>
<dbReference type="NCBIfam" id="NF002148">
    <property type="entry name" value="PRK00982.1-2"/>
    <property type="match status" value="1"/>
</dbReference>
<dbReference type="PANTHER" id="PTHR46153">
    <property type="entry name" value="ACYL CARRIER PROTEIN"/>
    <property type="match status" value="1"/>
</dbReference>
<dbReference type="PANTHER" id="PTHR46153:SF9">
    <property type="entry name" value="ACYL CARRIER PROTEIN 1, CHLOROPLASTIC"/>
    <property type="match status" value="1"/>
</dbReference>
<dbReference type="Pfam" id="PF00550">
    <property type="entry name" value="PP-binding"/>
    <property type="match status" value="1"/>
</dbReference>
<dbReference type="SMART" id="SM00823">
    <property type="entry name" value="PKS_PP"/>
    <property type="match status" value="1"/>
</dbReference>
<dbReference type="SUPFAM" id="SSF47336">
    <property type="entry name" value="ACP-like"/>
    <property type="match status" value="1"/>
</dbReference>
<dbReference type="PROSITE" id="PS50075">
    <property type="entry name" value="CARRIER"/>
    <property type="match status" value="1"/>
</dbReference>
<dbReference type="PROSITE" id="PS00012">
    <property type="entry name" value="PHOSPHOPANTETHEINE"/>
    <property type="match status" value="1"/>
</dbReference>
<gene>
    <name type="primary">ACL1.A2</name>
</gene>
<comment type="function">
    <text>Carrier of the growing fatty acid chain in fatty acid biosynthesis.</text>
</comment>
<comment type="pathway">
    <text>Lipid metabolism; fatty acid biosynthesis.</text>
</comment>
<comment type="subcellular location">
    <subcellularLocation>
        <location>Plastid</location>
        <location>Chloroplast</location>
    </subcellularLocation>
</comment>
<comment type="tissue specificity">
    <text>Seed.</text>
</comment>
<comment type="PTM">
    <text evidence="1">4'-phosphopantetheine is transferred from CoA to a specific serine of apo-ACP by acpS. This modification is essential for activity because fatty acids are bound in thioester linkage to the sulfhydryl of the prosthetic group (By similarity).</text>
</comment>
<comment type="miscellaneous">
    <text>In rape seeds ACP is coded by two multigene families. There are probably a total of 35 genes.</text>
</comment>
<comment type="similarity">
    <text evidence="3">Belongs to the acyl carrier protein (ACP) family.</text>
</comment>
<proteinExistence type="evidence at transcript level"/>
<organism>
    <name type="scientific">Brassica napus</name>
    <name type="common">Rape</name>
    <dbReference type="NCBI Taxonomy" id="3708"/>
    <lineage>
        <taxon>Eukaryota</taxon>
        <taxon>Viridiplantae</taxon>
        <taxon>Streptophyta</taxon>
        <taxon>Embryophyta</taxon>
        <taxon>Tracheophyta</taxon>
        <taxon>Spermatophyta</taxon>
        <taxon>Magnoliopsida</taxon>
        <taxon>eudicotyledons</taxon>
        <taxon>Gunneridae</taxon>
        <taxon>Pentapetalae</taxon>
        <taxon>rosids</taxon>
        <taxon>malvids</taxon>
        <taxon>Brassicales</taxon>
        <taxon>Brassicaceae</taxon>
        <taxon>Brassiceae</taxon>
        <taxon>Brassica</taxon>
    </lineage>
</organism>
<protein>
    <recommendedName>
        <fullName>Acyl carrier protein, chloroplastic</fullName>
    </recommendedName>
    <alternativeName>
        <fullName>ACP09</fullName>
        <shortName>ACP</shortName>
    </alternativeName>
    <alternativeName>
        <fullName>Clone 22C01</fullName>
    </alternativeName>
</protein>
<keyword id="KW-0150">Chloroplast</keyword>
<keyword id="KW-0275">Fatty acid biosynthesis</keyword>
<keyword id="KW-0276">Fatty acid metabolism</keyword>
<keyword id="KW-0444">Lipid biosynthesis</keyword>
<keyword id="KW-0443">Lipid metabolism</keyword>
<keyword id="KW-0596">Phosphopantetheine</keyword>
<keyword id="KW-0597">Phosphoprotein</keyword>
<keyword id="KW-0934">Plastid</keyword>
<keyword id="KW-0809">Transit peptide</keyword>
<reference key="1">
    <citation type="journal article" date="1990" name="Plant Mol. Biol.">
        <title>The isolation and sequence analysis of two seed-expressed acyl carrier protein genes from Brassica napus.</title>
        <authorList>
            <person name="de Silva J."/>
            <person name="Loader N.M."/>
            <person name="Jarman C."/>
            <person name="Windust J.H.C."/>
            <person name="Hughes S.G."/>
            <person name="Safford R."/>
        </authorList>
    </citation>
    <scope>NUCLEOTIDE SEQUENCE</scope>
    <source>
        <strain>cv. Jet neuf</strain>
        <tissue>Embryo</tissue>
    </source>
</reference>
<reference key="2">
    <citation type="journal article" date="1988" name="Eur. J. Biochem.">
        <title>Plastid-localised seed acyl-carrier protein of Brassica napus is encoded by a distinct, nuclear multigene family.</title>
        <authorList>
            <person name="Safford R."/>
            <person name="Windust J.H.C."/>
            <person name="Lucas C."/>
            <person name="de Silva J."/>
            <person name="James C.M."/>
            <person name="Hellyer A."/>
            <person name="Smith C.G."/>
            <person name="Slabas A.R."/>
            <person name="Hughes S.G."/>
        </authorList>
    </citation>
    <scope>NUCLEOTIDE SEQUENCE [MRNA] OF 39-134</scope>
    <source>
        <strain>cv. Jet neuf</strain>
        <tissue>Seed</tissue>
    </source>
</reference>
<reference key="3">
    <citation type="journal article" date="1994" name="Plant Mol. Biol. Rep.">
        <title>Nomenclature for genes encoding acyl carrier protein (ACP).</title>
        <authorList>
            <person name="von Wettstein-Knowles P."/>
            <person name="Knauf V."/>
            <person name="Ohlrogge J.B."/>
            <person name="Lamppa G."/>
            <person name="Safford R."/>
            <person name="Souciet G."/>
        </authorList>
    </citation>
    <scope>NOMENCLATURE</scope>
</reference>
<accession>P17650</accession>
<accession>P08972</accession>
<feature type="transit peptide" description="Chloroplast">
    <location>
        <begin position="1"/>
        <end position="51"/>
    </location>
</feature>
<feature type="chain" id="PRO_0000000573" description="Acyl carrier protein, chloroplastic">
    <location>
        <begin position="52"/>
        <end position="134"/>
    </location>
</feature>
<feature type="domain" description="Carrier" evidence="2">
    <location>
        <begin position="55"/>
        <end position="130"/>
    </location>
</feature>
<feature type="modified residue" description="O-(pantetheine 4'-phosphoryl)serine" evidence="2">
    <location>
        <position position="90"/>
    </location>
</feature>
<feature type="sequence conflict" description="In Ref. 2; CAA31518." evidence="3" ref="2">
    <original>L</original>
    <variation>F</variation>
    <location>
        <position position="39"/>
    </location>
</feature>
<evidence type="ECO:0000250" key="1"/>
<evidence type="ECO:0000255" key="2">
    <source>
        <dbReference type="PROSITE-ProRule" id="PRU00258"/>
    </source>
</evidence>
<evidence type="ECO:0000305" key="3"/>